<feature type="chain" id="PRO_0000100146" description="cAMP-activated global transcriptional regulator CRP">
    <location>
        <begin position="1"/>
        <end position="210"/>
    </location>
</feature>
<feature type="domain" description="HTH crp-type" evidence="2">
    <location>
        <begin position="138"/>
        <end position="210"/>
    </location>
</feature>
<feature type="DNA-binding region" description="H-T-H motif" evidence="2">
    <location>
        <begin position="180"/>
        <end position="186"/>
    </location>
</feature>
<feature type="region of interest" description="Activating region 2 (AR2); probably contacts the N-terminus of RpoA" evidence="1">
    <location>
        <begin position="20"/>
        <end position="22"/>
    </location>
</feature>
<feature type="region of interest" description="Activating region 3 (AR3); probably contacts sigma-70 (RpoD)" evidence="1">
    <location>
        <begin position="53"/>
        <end position="59"/>
    </location>
</feature>
<feature type="region of interest" description="Activating region 1 (AR1); probably contacts the C-terminus of RpoA" evidence="1">
    <location>
        <begin position="154"/>
        <end position="163"/>
    </location>
</feature>
<feature type="binding site" evidence="1">
    <location>
        <begin position="57"/>
        <end position="63"/>
    </location>
    <ligand>
        <name>3',5'-cyclic AMP</name>
        <dbReference type="ChEBI" id="CHEBI:58165"/>
        <label>1</label>
    </ligand>
</feature>
<feature type="binding site" evidence="1">
    <location>
        <begin position="72"/>
        <end position="74"/>
    </location>
    <ligand>
        <name>3',5'-cyclic AMP</name>
        <dbReference type="ChEBI" id="CHEBI:58165"/>
        <label>1</label>
    </ligand>
</feature>
<feature type="binding site" evidence="1">
    <location>
        <begin position="83"/>
        <end position="84"/>
    </location>
    <ligand>
        <name>3',5'-cyclic AMP</name>
        <dbReference type="ChEBI" id="CHEBI:58165"/>
        <label>1</label>
    </ligand>
</feature>
<feature type="binding site" evidence="1">
    <location>
        <begin position="128"/>
        <end position="129"/>
    </location>
    <ligand>
        <name>3',5'-cyclic AMP</name>
        <dbReference type="ChEBI" id="CHEBI:58165"/>
        <label>1</label>
    </ligand>
</feature>
<feature type="binding site" evidence="1">
    <location>
        <begin position="136"/>
        <end position="137"/>
    </location>
    <ligand>
        <name>3',5'-cyclic AMP</name>
        <dbReference type="ChEBI" id="CHEBI:58165"/>
        <label>2</label>
    </ligand>
</feature>
<feature type="binding site" evidence="1">
    <location>
        <begin position="171"/>
        <end position="181"/>
    </location>
    <ligand>
        <name>3',5'-cyclic AMP</name>
        <dbReference type="ChEBI" id="CHEBI:58165"/>
        <label>2</label>
    </ligand>
</feature>
<feature type="site" description="Activating region 2 (AR2); probably contacts the N-terminus of RpoA" evidence="1">
    <location>
        <position position="97"/>
    </location>
</feature>
<feature type="site" description="Activating region 2 (AR2); probably contacts the N-terminus of RpoA" evidence="1">
    <location>
        <position position="102"/>
    </location>
</feature>
<feature type="modified residue" description="N6-acetyllysine" evidence="1">
    <location>
        <position position="101"/>
    </location>
</feature>
<reference key="1">
    <citation type="journal article" date="2002" name="Proc. Natl. Acad. Sci. U.S.A.">
        <title>Extensive mosaic structure revealed by the complete genome sequence of uropathogenic Escherichia coli.</title>
        <authorList>
            <person name="Welch R.A."/>
            <person name="Burland V."/>
            <person name="Plunkett G. III"/>
            <person name="Redford P."/>
            <person name="Roesch P."/>
            <person name="Rasko D."/>
            <person name="Buckles E.L."/>
            <person name="Liou S.-R."/>
            <person name="Boutin A."/>
            <person name="Hackett J."/>
            <person name="Stroud D."/>
            <person name="Mayhew G.F."/>
            <person name="Rose D.J."/>
            <person name="Zhou S."/>
            <person name="Schwartz D.C."/>
            <person name="Perna N.T."/>
            <person name="Mobley H.L.T."/>
            <person name="Donnenberg M.S."/>
            <person name="Blattner F.R."/>
        </authorList>
    </citation>
    <scope>NUCLEOTIDE SEQUENCE [LARGE SCALE GENOMIC DNA]</scope>
    <source>
        <strain>CFT073 / ATCC 700928 / UPEC</strain>
    </source>
</reference>
<gene>
    <name type="primary">crp</name>
    <name type="ordered locus">c4132</name>
</gene>
<keyword id="KW-0007">Acetylation</keyword>
<keyword id="KW-0010">Activator</keyword>
<keyword id="KW-0114">cAMP</keyword>
<keyword id="KW-0116">cAMP-binding</keyword>
<keyword id="KW-0238">DNA-binding</keyword>
<keyword id="KW-0547">Nucleotide-binding</keyword>
<keyword id="KW-1185">Reference proteome</keyword>
<keyword id="KW-0804">Transcription</keyword>
<keyword id="KW-0805">Transcription regulation</keyword>
<proteinExistence type="inferred from homology"/>
<evidence type="ECO:0000250" key="1"/>
<evidence type="ECO:0000255" key="2">
    <source>
        <dbReference type="PROSITE-ProRule" id="PRU00387"/>
    </source>
</evidence>
<name>CRP_ECOL6</name>
<organism>
    <name type="scientific">Escherichia coli O6:H1 (strain CFT073 / ATCC 700928 / UPEC)</name>
    <dbReference type="NCBI Taxonomy" id="199310"/>
    <lineage>
        <taxon>Bacteria</taxon>
        <taxon>Pseudomonadati</taxon>
        <taxon>Pseudomonadota</taxon>
        <taxon>Gammaproteobacteria</taxon>
        <taxon>Enterobacterales</taxon>
        <taxon>Enterobacteriaceae</taxon>
        <taxon>Escherichia</taxon>
    </lineage>
</organism>
<sequence>MVLGKPQTDPTLEWFLSHCHIHKYPSKSTLIHQGEKAETLYYIVKGSVAVLIKDEEGKEMILSYLNQGDFIGELGLFEEGQERSAWVRAKTACEVAEISYKKFRQLIQVNPDILMRLSAQMARRLQVTSEKVGNLAFLDVTGRIAQTLLNLAKQPDAMTHPDGMQIKITRQEIGQIVGCSRETVGRILKMLEDQNLISAHGKTIVVYGTR</sequence>
<protein>
    <recommendedName>
        <fullName>cAMP-activated global transcriptional regulator CRP</fullName>
    </recommendedName>
    <alternativeName>
        <fullName>Catabolite activator protein</fullName>
        <shortName>CAP</shortName>
    </alternativeName>
    <alternativeName>
        <fullName>Catabolite gene activator</fullName>
    </alternativeName>
    <alternativeName>
        <fullName>cAMP receptor protein</fullName>
        <shortName>CRP</shortName>
    </alternativeName>
    <alternativeName>
        <fullName>cAMP regulatory protein</fullName>
    </alternativeName>
</protein>
<accession>P0ACJ9</accession>
<accession>P03020</accession>
<comment type="function">
    <text evidence="1">A global transcription regulator. Complexes with cyclic AMP (cAMP) which allosterically activates DNA binding to regulate transcription. It can act as an activator, repressor, coactivator or corepressor. Induces a severe bend in DNA. Acts as a negative regulator of its own synthesis as well as for adenylate cyclase (cyaA), which generates cAMP. Plays a major role in carbon catabolite repression (CCR) (By similarity).</text>
</comment>
<comment type="subunit">
    <text evidence="1">Homodimer, which upon binding cAMP is able to bind DNA. Binds the N- and C-terminus of RNA polymerase subunit RpoA and sigma-70 (RpoD) (By similarity).</text>
</comment>
<comment type="domain">
    <text evidence="1">The N-terminal domain binds cAMP and is responsible for homodimerization, while the C-terminal domain binds DNA when cAMP is bound.</text>
</comment>
<dbReference type="EMBL" id="AE014075">
    <property type="protein sequence ID" value="AAN82570.1"/>
    <property type="molecule type" value="Genomic_DNA"/>
</dbReference>
<dbReference type="RefSeq" id="WP_000242755.1">
    <property type="nucleotide sequence ID" value="NZ_CP051263.1"/>
</dbReference>
<dbReference type="BMRB" id="P0ACJ9"/>
<dbReference type="SMR" id="P0ACJ9"/>
<dbReference type="STRING" id="199310.c4132"/>
<dbReference type="GeneID" id="93122175"/>
<dbReference type="KEGG" id="ecc:c4132"/>
<dbReference type="eggNOG" id="COG0664">
    <property type="taxonomic scope" value="Bacteria"/>
</dbReference>
<dbReference type="HOGENOM" id="CLU_075053_3_5_6"/>
<dbReference type="BioCyc" id="ECOL199310:C4132-MONOMER"/>
<dbReference type="Proteomes" id="UP000001410">
    <property type="component" value="Chromosome"/>
</dbReference>
<dbReference type="GO" id="GO:0005829">
    <property type="term" value="C:cytosol"/>
    <property type="evidence" value="ECO:0007669"/>
    <property type="project" value="TreeGrafter"/>
</dbReference>
<dbReference type="GO" id="GO:0030552">
    <property type="term" value="F:cAMP binding"/>
    <property type="evidence" value="ECO:0007669"/>
    <property type="project" value="UniProtKB-KW"/>
</dbReference>
<dbReference type="GO" id="GO:0003677">
    <property type="term" value="F:DNA binding"/>
    <property type="evidence" value="ECO:0007669"/>
    <property type="project" value="UniProtKB-KW"/>
</dbReference>
<dbReference type="GO" id="GO:0003700">
    <property type="term" value="F:DNA-binding transcription factor activity"/>
    <property type="evidence" value="ECO:0007669"/>
    <property type="project" value="InterPro"/>
</dbReference>
<dbReference type="CDD" id="cd00038">
    <property type="entry name" value="CAP_ED"/>
    <property type="match status" value="1"/>
</dbReference>
<dbReference type="CDD" id="cd00092">
    <property type="entry name" value="HTH_CRP"/>
    <property type="match status" value="1"/>
</dbReference>
<dbReference type="FunFam" id="1.10.10.10:FF:000006">
    <property type="entry name" value="cAMP-activated global transcriptional regulator CRP"/>
    <property type="match status" value="1"/>
</dbReference>
<dbReference type="FunFam" id="2.60.120.10:FF:000001">
    <property type="entry name" value="cAMP-activated global transcriptional regulator CRP"/>
    <property type="match status" value="1"/>
</dbReference>
<dbReference type="Gene3D" id="2.60.120.10">
    <property type="entry name" value="Jelly Rolls"/>
    <property type="match status" value="1"/>
</dbReference>
<dbReference type="Gene3D" id="1.10.10.10">
    <property type="entry name" value="Winged helix-like DNA-binding domain superfamily/Winged helix DNA-binding domain"/>
    <property type="match status" value="1"/>
</dbReference>
<dbReference type="InterPro" id="IPR018488">
    <property type="entry name" value="cNMP-bd_CS"/>
</dbReference>
<dbReference type="InterPro" id="IPR000595">
    <property type="entry name" value="cNMP-bd_dom"/>
</dbReference>
<dbReference type="InterPro" id="IPR018490">
    <property type="entry name" value="cNMP-bd_dom_sf"/>
</dbReference>
<dbReference type="InterPro" id="IPR050397">
    <property type="entry name" value="Env_Response_Regulators"/>
</dbReference>
<dbReference type="InterPro" id="IPR012318">
    <property type="entry name" value="HTH_CRP"/>
</dbReference>
<dbReference type="InterPro" id="IPR014710">
    <property type="entry name" value="RmlC-like_jellyroll"/>
</dbReference>
<dbReference type="InterPro" id="IPR018335">
    <property type="entry name" value="Tscrpt_reg_HTH_Crp-type_CS"/>
</dbReference>
<dbReference type="InterPro" id="IPR036388">
    <property type="entry name" value="WH-like_DNA-bd_sf"/>
</dbReference>
<dbReference type="InterPro" id="IPR036390">
    <property type="entry name" value="WH_DNA-bd_sf"/>
</dbReference>
<dbReference type="NCBIfam" id="NF008732">
    <property type="entry name" value="PRK11753.1"/>
    <property type="match status" value="1"/>
</dbReference>
<dbReference type="PANTHER" id="PTHR24567">
    <property type="entry name" value="CRP FAMILY TRANSCRIPTIONAL REGULATORY PROTEIN"/>
    <property type="match status" value="1"/>
</dbReference>
<dbReference type="PANTHER" id="PTHR24567:SF68">
    <property type="entry name" value="DNA-BINDING TRANSCRIPTIONAL DUAL REGULATOR CRP"/>
    <property type="match status" value="1"/>
</dbReference>
<dbReference type="Pfam" id="PF00027">
    <property type="entry name" value="cNMP_binding"/>
    <property type="match status" value="1"/>
</dbReference>
<dbReference type="Pfam" id="PF13545">
    <property type="entry name" value="HTH_Crp_2"/>
    <property type="match status" value="1"/>
</dbReference>
<dbReference type="PRINTS" id="PR00034">
    <property type="entry name" value="HTHCRP"/>
</dbReference>
<dbReference type="SMART" id="SM00100">
    <property type="entry name" value="cNMP"/>
    <property type="match status" value="1"/>
</dbReference>
<dbReference type="SMART" id="SM00419">
    <property type="entry name" value="HTH_CRP"/>
    <property type="match status" value="1"/>
</dbReference>
<dbReference type="SUPFAM" id="SSF51206">
    <property type="entry name" value="cAMP-binding domain-like"/>
    <property type="match status" value="1"/>
</dbReference>
<dbReference type="SUPFAM" id="SSF46785">
    <property type="entry name" value="Winged helix' DNA-binding domain"/>
    <property type="match status" value="1"/>
</dbReference>
<dbReference type="PROSITE" id="PS00888">
    <property type="entry name" value="CNMP_BINDING_1"/>
    <property type="match status" value="1"/>
</dbReference>
<dbReference type="PROSITE" id="PS00889">
    <property type="entry name" value="CNMP_BINDING_2"/>
    <property type="match status" value="1"/>
</dbReference>
<dbReference type="PROSITE" id="PS50042">
    <property type="entry name" value="CNMP_BINDING_3"/>
    <property type="match status" value="1"/>
</dbReference>
<dbReference type="PROSITE" id="PS00042">
    <property type="entry name" value="HTH_CRP_1"/>
    <property type="match status" value="1"/>
</dbReference>
<dbReference type="PROSITE" id="PS51063">
    <property type="entry name" value="HTH_CRP_2"/>
    <property type="match status" value="1"/>
</dbReference>